<evidence type="ECO:0000250" key="1"/>
<evidence type="ECO:0000255" key="2"/>
<evidence type="ECO:0000305" key="3"/>
<reference key="1">
    <citation type="journal article" date="1992" name="Nucleic Acids Res.">
        <title>The complete nucleotide sequence of the Crossostoma lacustre mitochondrial genome: conservation and variations among vertebrates.</title>
        <authorList>
            <person name="Tzeng C.-S."/>
            <person name="Hui C.-F."/>
            <person name="Shen S.-C."/>
            <person name="Huang P.C."/>
        </authorList>
    </citation>
    <scope>NUCLEOTIDE SEQUENCE [GENOMIC DNA]</scope>
</reference>
<organism>
    <name type="scientific">Formosania lacustris</name>
    <name type="common">Oriental stream loach</name>
    <name type="synonym">Crossostoma lacustre</name>
    <dbReference type="NCBI Taxonomy" id="7980"/>
    <lineage>
        <taxon>Eukaryota</taxon>
        <taxon>Metazoa</taxon>
        <taxon>Chordata</taxon>
        <taxon>Craniata</taxon>
        <taxon>Vertebrata</taxon>
        <taxon>Euteleostomi</taxon>
        <taxon>Actinopterygii</taxon>
        <taxon>Neopterygii</taxon>
        <taxon>Teleostei</taxon>
        <taxon>Ostariophysi</taxon>
        <taxon>Cypriniformes</taxon>
        <taxon>Gastromyzontidae</taxon>
        <taxon>Formosania</taxon>
    </lineage>
</organism>
<proteinExistence type="inferred from homology"/>
<name>NU4M_FORLA</name>
<dbReference type="EC" id="7.1.1.2"/>
<dbReference type="EMBL" id="M91245">
    <property type="protein sequence ID" value="AAB96820.1"/>
    <property type="molecule type" value="Genomic_DNA"/>
</dbReference>
<dbReference type="PIR" id="S35470">
    <property type="entry name" value="S35470"/>
</dbReference>
<dbReference type="RefSeq" id="NP_008312.1">
    <property type="nucleotide sequence ID" value="NC_001727.1"/>
</dbReference>
<dbReference type="SMR" id="P34194"/>
<dbReference type="GeneID" id="807988"/>
<dbReference type="CTD" id="4538"/>
<dbReference type="GO" id="GO:0031966">
    <property type="term" value="C:mitochondrial membrane"/>
    <property type="evidence" value="ECO:0007669"/>
    <property type="project" value="UniProtKB-SubCell"/>
</dbReference>
<dbReference type="GO" id="GO:0008137">
    <property type="term" value="F:NADH dehydrogenase (ubiquinone) activity"/>
    <property type="evidence" value="ECO:0007669"/>
    <property type="project" value="UniProtKB-EC"/>
</dbReference>
<dbReference type="GO" id="GO:0048039">
    <property type="term" value="F:ubiquinone binding"/>
    <property type="evidence" value="ECO:0007669"/>
    <property type="project" value="TreeGrafter"/>
</dbReference>
<dbReference type="GO" id="GO:0042773">
    <property type="term" value="P:ATP synthesis coupled electron transport"/>
    <property type="evidence" value="ECO:0007669"/>
    <property type="project" value="InterPro"/>
</dbReference>
<dbReference type="GO" id="GO:0015990">
    <property type="term" value="P:electron transport coupled proton transport"/>
    <property type="evidence" value="ECO:0007669"/>
    <property type="project" value="TreeGrafter"/>
</dbReference>
<dbReference type="InterPro" id="IPR000260">
    <property type="entry name" value="NADH4_N"/>
</dbReference>
<dbReference type="InterPro" id="IPR010227">
    <property type="entry name" value="NADH_Q_OxRdtase_chainM/4"/>
</dbReference>
<dbReference type="InterPro" id="IPR003918">
    <property type="entry name" value="NADH_UbQ_OxRdtase"/>
</dbReference>
<dbReference type="InterPro" id="IPR001750">
    <property type="entry name" value="ND/Mrp_TM"/>
</dbReference>
<dbReference type="NCBIfam" id="TIGR01972">
    <property type="entry name" value="NDH_I_M"/>
    <property type="match status" value="1"/>
</dbReference>
<dbReference type="PANTHER" id="PTHR43507">
    <property type="entry name" value="NADH-UBIQUINONE OXIDOREDUCTASE CHAIN 4"/>
    <property type="match status" value="1"/>
</dbReference>
<dbReference type="PANTHER" id="PTHR43507:SF20">
    <property type="entry name" value="NADH-UBIQUINONE OXIDOREDUCTASE CHAIN 4"/>
    <property type="match status" value="1"/>
</dbReference>
<dbReference type="Pfam" id="PF01059">
    <property type="entry name" value="Oxidored_q5_N"/>
    <property type="match status" value="1"/>
</dbReference>
<dbReference type="Pfam" id="PF00361">
    <property type="entry name" value="Proton_antipo_M"/>
    <property type="match status" value="1"/>
</dbReference>
<dbReference type="PRINTS" id="PR01437">
    <property type="entry name" value="NUOXDRDTASE4"/>
</dbReference>
<geneLocation type="mitochondrion"/>
<comment type="function">
    <text evidence="1">Core subunit of the mitochondrial membrane respiratory chain NADH dehydrogenase (Complex I) that is believed to belong to the minimal assembly required for catalysis. Complex I functions in the transfer of electrons from NADH to the respiratory chain. The immediate electron acceptor for the enzyme is believed to be ubiquinone (By similarity).</text>
</comment>
<comment type="catalytic activity">
    <reaction>
        <text>a ubiquinone + NADH + 5 H(+)(in) = a ubiquinol + NAD(+) + 4 H(+)(out)</text>
        <dbReference type="Rhea" id="RHEA:29091"/>
        <dbReference type="Rhea" id="RHEA-COMP:9565"/>
        <dbReference type="Rhea" id="RHEA-COMP:9566"/>
        <dbReference type="ChEBI" id="CHEBI:15378"/>
        <dbReference type="ChEBI" id="CHEBI:16389"/>
        <dbReference type="ChEBI" id="CHEBI:17976"/>
        <dbReference type="ChEBI" id="CHEBI:57540"/>
        <dbReference type="ChEBI" id="CHEBI:57945"/>
        <dbReference type="EC" id="7.1.1.2"/>
    </reaction>
</comment>
<comment type="subcellular location">
    <subcellularLocation>
        <location evidence="1">Mitochondrion membrane</location>
        <topology evidence="1">Multi-pass membrane protein</topology>
    </subcellularLocation>
</comment>
<comment type="similarity">
    <text evidence="3">Belongs to the complex I subunit 4 family.</text>
</comment>
<protein>
    <recommendedName>
        <fullName>NADH-ubiquinone oxidoreductase chain 4</fullName>
        <ecNumber>7.1.1.2</ecNumber>
    </recommendedName>
    <alternativeName>
        <fullName>NADH dehydrogenase subunit 4</fullName>
    </alternativeName>
</protein>
<gene>
    <name type="primary">MT-ND4</name>
    <name type="synonym">MTND4</name>
    <name type="synonym">NADH4</name>
    <name type="synonym">ND4</name>
</gene>
<keyword id="KW-0249">Electron transport</keyword>
<keyword id="KW-0472">Membrane</keyword>
<keyword id="KW-0496">Mitochondrion</keyword>
<keyword id="KW-0520">NAD</keyword>
<keyword id="KW-0679">Respiratory chain</keyword>
<keyword id="KW-1278">Translocase</keyword>
<keyword id="KW-0812">Transmembrane</keyword>
<keyword id="KW-1133">Transmembrane helix</keyword>
<keyword id="KW-0813">Transport</keyword>
<keyword id="KW-0830">Ubiquinone</keyword>
<sequence length="460" mass="51069">MLKVLIPTIMLFPTIWLTPPKWLWSTTTAHGLLIALISLTWLKWSSEVGSATSSLYLASDPLSTPLLGLTCWLLPLMVLASQNHITPEPIIRQRLYITLLASLQTFLIMAFGATEIIMFYIMFEATLIPTLIIITRWGNQTERLNAGTYFLFYTLAGSLPLLVALLLLQQTNGTLSLLILQHSQPLALTSWGHKIWWAGCLIAFLVKMPLYGVHLWLPKAHVEAPVAGSMVLAAVLLKLGGYGMMRMMVVLDPLSKELAYPFIILALWGIIMTGSICLRQTDLKSLIAYSSVSHMGLVAGGILIQTPWGFTGAIILMIAHGLVSSALFCLANTAYERTHSRTMILARGLQMIFPLTAVWWFIANLANLALPPLPNLMGELMIITTLFNWSPLTIILTGTGTLITAGYSLYLFLMSQRGPTPKHIVGLPPFHTREHLLMALHLIPVLLLMTKPEIMWGWCY</sequence>
<feature type="chain" id="PRO_0000117924" description="NADH-ubiquinone oxidoreductase chain 4">
    <location>
        <begin position="1"/>
        <end position="460"/>
    </location>
</feature>
<feature type="transmembrane region" description="Helical" evidence="2">
    <location>
        <begin position="20"/>
        <end position="42"/>
    </location>
</feature>
<feature type="transmembrane region" description="Helical" evidence="2">
    <location>
        <begin position="61"/>
        <end position="81"/>
    </location>
</feature>
<feature type="transmembrane region" description="Helical" evidence="2">
    <location>
        <begin position="93"/>
        <end position="113"/>
    </location>
</feature>
<feature type="transmembrane region" description="Helical" evidence="2">
    <location>
        <begin position="114"/>
        <end position="134"/>
    </location>
</feature>
<feature type="transmembrane region" description="Helical" evidence="2">
    <location>
        <begin position="148"/>
        <end position="168"/>
    </location>
</feature>
<feature type="transmembrane region" description="Helical" evidence="2">
    <location>
        <begin position="195"/>
        <end position="215"/>
    </location>
</feature>
<feature type="transmembrane region" description="Helical" evidence="2">
    <location>
        <begin position="225"/>
        <end position="245"/>
    </location>
</feature>
<feature type="transmembrane region" description="Helical" evidence="2">
    <location>
        <begin position="258"/>
        <end position="278"/>
    </location>
</feature>
<feature type="transmembrane region" description="Helical" evidence="2">
    <location>
        <begin position="285"/>
        <end position="304"/>
    </location>
</feature>
<feature type="transmembrane region" description="Helical" evidence="2">
    <location>
        <begin position="309"/>
        <end position="331"/>
    </location>
</feature>
<feature type="transmembrane region" description="Helical" evidence="2">
    <location>
        <begin position="351"/>
        <end position="371"/>
    </location>
</feature>
<feature type="transmembrane region" description="Helical" evidence="2">
    <location>
        <begin position="394"/>
        <end position="414"/>
    </location>
</feature>
<accession>P34194</accession>